<sequence length="78" mass="8640">MSTIEERVKKIIGEQLGVKQEEVTNNASFVEDLGADSLDTVELVMALEEEFDTEIPDEEAEKITTVQAAIDYINGHQA</sequence>
<gene>
    <name evidence="2" type="primary">acpP</name>
    <name type="ordered locus">c1364</name>
</gene>
<evidence type="ECO:0000250" key="1"/>
<evidence type="ECO:0000255" key="2">
    <source>
        <dbReference type="HAMAP-Rule" id="MF_01217"/>
    </source>
</evidence>
<evidence type="ECO:0000255" key="3">
    <source>
        <dbReference type="PROSITE-ProRule" id="PRU00258"/>
    </source>
</evidence>
<dbReference type="EMBL" id="AE014075">
    <property type="protein sequence ID" value="AAN79834.1"/>
    <property type="molecule type" value="Genomic_DNA"/>
</dbReference>
<dbReference type="RefSeq" id="WP_000103754.1">
    <property type="nucleotide sequence ID" value="NZ_CP051263.1"/>
</dbReference>
<dbReference type="SMR" id="P0A6A9"/>
<dbReference type="STRING" id="199310.c1364"/>
<dbReference type="GeneID" id="98387866"/>
<dbReference type="KEGG" id="ecc:c1364"/>
<dbReference type="eggNOG" id="COG0236">
    <property type="taxonomic scope" value="Bacteria"/>
</dbReference>
<dbReference type="HOGENOM" id="CLU_108696_5_1_6"/>
<dbReference type="BioCyc" id="ECOL199310:C1364-MONOMER"/>
<dbReference type="UniPathway" id="UPA00094"/>
<dbReference type="Proteomes" id="UP000001410">
    <property type="component" value="Chromosome"/>
</dbReference>
<dbReference type="GO" id="GO:0005829">
    <property type="term" value="C:cytosol"/>
    <property type="evidence" value="ECO:0007669"/>
    <property type="project" value="TreeGrafter"/>
</dbReference>
<dbReference type="GO" id="GO:0016020">
    <property type="term" value="C:membrane"/>
    <property type="evidence" value="ECO:0007669"/>
    <property type="project" value="GOC"/>
</dbReference>
<dbReference type="GO" id="GO:0000035">
    <property type="term" value="F:acyl binding"/>
    <property type="evidence" value="ECO:0007669"/>
    <property type="project" value="TreeGrafter"/>
</dbReference>
<dbReference type="GO" id="GO:0000036">
    <property type="term" value="F:acyl carrier activity"/>
    <property type="evidence" value="ECO:0007669"/>
    <property type="project" value="UniProtKB-UniRule"/>
</dbReference>
<dbReference type="GO" id="GO:0009245">
    <property type="term" value="P:lipid A biosynthetic process"/>
    <property type="evidence" value="ECO:0007669"/>
    <property type="project" value="TreeGrafter"/>
</dbReference>
<dbReference type="FunFam" id="1.10.1200.10:FF:000001">
    <property type="entry name" value="Acyl carrier protein"/>
    <property type="match status" value="1"/>
</dbReference>
<dbReference type="Gene3D" id="1.10.1200.10">
    <property type="entry name" value="ACP-like"/>
    <property type="match status" value="1"/>
</dbReference>
<dbReference type="HAMAP" id="MF_01217">
    <property type="entry name" value="Acyl_carrier"/>
    <property type="match status" value="1"/>
</dbReference>
<dbReference type="InterPro" id="IPR003231">
    <property type="entry name" value="ACP"/>
</dbReference>
<dbReference type="InterPro" id="IPR036736">
    <property type="entry name" value="ACP-like_sf"/>
</dbReference>
<dbReference type="InterPro" id="IPR009081">
    <property type="entry name" value="PP-bd_ACP"/>
</dbReference>
<dbReference type="InterPro" id="IPR006162">
    <property type="entry name" value="Ppantetheine_attach_site"/>
</dbReference>
<dbReference type="NCBIfam" id="TIGR00517">
    <property type="entry name" value="acyl_carrier"/>
    <property type="match status" value="1"/>
</dbReference>
<dbReference type="NCBIfam" id="NF002148">
    <property type="entry name" value="PRK00982.1-2"/>
    <property type="match status" value="1"/>
</dbReference>
<dbReference type="NCBIfam" id="NF002149">
    <property type="entry name" value="PRK00982.1-3"/>
    <property type="match status" value="1"/>
</dbReference>
<dbReference type="NCBIfam" id="NF002150">
    <property type="entry name" value="PRK00982.1-4"/>
    <property type="match status" value="1"/>
</dbReference>
<dbReference type="NCBIfam" id="NF002151">
    <property type="entry name" value="PRK00982.1-5"/>
    <property type="match status" value="1"/>
</dbReference>
<dbReference type="PANTHER" id="PTHR20863">
    <property type="entry name" value="ACYL CARRIER PROTEIN"/>
    <property type="match status" value="1"/>
</dbReference>
<dbReference type="PANTHER" id="PTHR20863:SF76">
    <property type="entry name" value="CARRIER DOMAIN-CONTAINING PROTEIN"/>
    <property type="match status" value="1"/>
</dbReference>
<dbReference type="Pfam" id="PF00550">
    <property type="entry name" value="PP-binding"/>
    <property type="match status" value="1"/>
</dbReference>
<dbReference type="SUPFAM" id="SSF47336">
    <property type="entry name" value="ACP-like"/>
    <property type="match status" value="1"/>
</dbReference>
<dbReference type="PROSITE" id="PS50075">
    <property type="entry name" value="CARRIER"/>
    <property type="match status" value="1"/>
</dbReference>
<dbReference type="PROSITE" id="PS00012">
    <property type="entry name" value="PHOSPHOPANTETHEINE"/>
    <property type="match status" value="1"/>
</dbReference>
<organism>
    <name type="scientific">Escherichia coli O6:H1 (strain CFT073 / ATCC 700928 / UPEC)</name>
    <dbReference type="NCBI Taxonomy" id="199310"/>
    <lineage>
        <taxon>Bacteria</taxon>
        <taxon>Pseudomonadati</taxon>
        <taxon>Pseudomonadota</taxon>
        <taxon>Gammaproteobacteria</taxon>
        <taxon>Enterobacterales</taxon>
        <taxon>Enterobacteriaceae</taxon>
        <taxon>Escherichia</taxon>
    </lineage>
</organism>
<keyword id="KW-0963">Cytoplasm</keyword>
<keyword id="KW-0275">Fatty acid biosynthesis</keyword>
<keyword id="KW-0276">Fatty acid metabolism</keyword>
<keyword id="KW-0444">Lipid biosynthesis</keyword>
<keyword id="KW-0443">Lipid metabolism</keyword>
<keyword id="KW-0596">Phosphopantetheine</keyword>
<keyword id="KW-0597">Phosphoprotein</keyword>
<keyword id="KW-1185">Reference proteome</keyword>
<feature type="initiator methionine" description="Removed" evidence="1">
    <location>
        <position position="1"/>
    </location>
</feature>
<feature type="chain" id="PRO_0000180136" description="Acyl carrier protein">
    <location>
        <begin position="2"/>
        <end position="78"/>
    </location>
</feature>
<feature type="domain" description="Carrier" evidence="3">
    <location>
        <begin position="2"/>
        <end position="77"/>
    </location>
</feature>
<feature type="modified residue" description="O-(pantetheine 4'-phosphoryl)serine" evidence="3">
    <location>
        <position position="37"/>
    </location>
</feature>
<accession>P0A6A9</accession>
<accession>P02901</accession>
<accession>Q53352</accession>
<reference key="1">
    <citation type="journal article" date="2002" name="Proc. Natl. Acad. Sci. U.S.A.">
        <title>Extensive mosaic structure revealed by the complete genome sequence of uropathogenic Escherichia coli.</title>
        <authorList>
            <person name="Welch R.A."/>
            <person name="Burland V."/>
            <person name="Plunkett G. III"/>
            <person name="Redford P."/>
            <person name="Roesch P."/>
            <person name="Rasko D."/>
            <person name="Buckles E.L."/>
            <person name="Liou S.-R."/>
            <person name="Boutin A."/>
            <person name="Hackett J."/>
            <person name="Stroud D."/>
            <person name="Mayhew G.F."/>
            <person name="Rose D.J."/>
            <person name="Zhou S."/>
            <person name="Schwartz D.C."/>
            <person name="Perna N.T."/>
            <person name="Mobley H.L.T."/>
            <person name="Donnenberg M.S."/>
            <person name="Blattner F.R."/>
        </authorList>
    </citation>
    <scope>NUCLEOTIDE SEQUENCE [LARGE SCALE GENOMIC DNA]</scope>
    <source>
        <strain>CFT073 / ATCC 700928 / UPEC</strain>
    </source>
</reference>
<protein>
    <recommendedName>
        <fullName evidence="2">Acyl carrier protein</fullName>
        <shortName evidence="2">ACP</shortName>
    </recommendedName>
    <alternativeName>
        <fullName>Cytosolic-activating factor</fullName>
        <shortName>CAF</shortName>
    </alternativeName>
    <alternativeName>
        <fullName>Fatty acid synthase acyl carrier protein</fullName>
    </alternativeName>
</protein>
<comment type="function">
    <text evidence="2">Carrier of the growing fatty acid chain in fatty acid biosynthesis.</text>
</comment>
<comment type="pathway">
    <text evidence="2">Lipid metabolism; fatty acid biosynthesis.</text>
</comment>
<comment type="subcellular location">
    <subcellularLocation>
        <location evidence="2">Cytoplasm</location>
    </subcellularLocation>
</comment>
<comment type="PTM">
    <text evidence="2">4'-phosphopantetheine is transferred from CoA to a specific serine of apo-ACP by AcpS. This modification is essential for activity because fatty acids are bound in thioester linkage to the sulfhydryl of the prosthetic group.</text>
</comment>
<comment type="similarity">
    <text evidence="2">Belongs to the acyl carrier protein (ACP) family.</text>
</comment>
<name>ACP_ECOL6</name>
<proteinExistence type="inferred from homology"/>